<protein>
    <recommendedName>
        <fullName>Putative ankyrin repeat protein R734</fullName>
    </recommendedName>
</protein>
<name>YR734_MIMIV</name>
<organism>
    <name type="scientific">Acanthamoeba polyphaga mimivirus</name>
    <name type="common">APMV</name>
    <dbReference type="NCBI Taxonomy" id="212035"/>
    <lineage>
        <taxon>Viruses</taxon>
        <taxon>Varidnaviria</taxon>
        <taxon>Bamfordvirae</taxon>
        <taxon>Nucleocytoviricota</taxon>
        <taxon>Megaviricetes</taxon>
        <taxon>Imitervirales</taxon>
        <taxon>Mimiviridae</taxon>
        <taxon>Megamimivirinae</taxon>
        <taxon>Mimivirus</taxon>
        <taxon>Mimivirus bradfordmassiliense</taxon>
    </lineage>
</organism>
<proteinExistence type="predicted"/>
<reference key="1">
    <citation type="journal article" date="2004" name="Science">
        <title>The 1.2-megabase genome sequence of Mimivirus.</title>
        <authorList>
            <person name="Raoult D."/>
            <person name="Audic S."/>
            <person name="Robert C."/>
            <person name="Abergel C."/>
            <person name="Renesto P."/>
            <person name="Ogata H."/>
            <person name="La Scola B."/>
            <person name="Susan M."/>
            <person name="Claverie J.-M."/>
        </authorList>
    </citation>
    <scope>NUCLEOTIDE SEQUENCE [LARGE SCALE GENOMIC DNA]</scope>
    <source>
        <strain>Rowbotham-Bradford</strain>
    </source>
</reference>
<sequence>MYFRIRKLDEPDSNDNDFYVVIPVKDIFTWFCSIYSLDKTSIFIHDINNLNPNEYTIQQVIPGSDISPIKNLNEYLTNDIIITNTLDLNDLETFIYLLTNGANNSEGIKLLVTWCVYYGRLDVLNYLVDNNILPTENTLRDYLPITISENHDEVYKFIIDHEFHLGYKSNNLSWILTSEYKYINSLKYTLSNDLKLSDLIFMHHLKVEILQELFSSGYEFDNRLFEKICRTTNITLIKFFMDIGFDPMNIVIQPNQLCIYLANILLDSGRQFTQNEISQIITFSIVSDDYWDIIAFTERTGYNWNNINDNFINCIIRRGSLDHLKDILNRTSLNINRFIDNIVITAIFDSRKDLIMYAYENNVDIAKYIQSLPYSNDTNFIKWYIELLNSDGNFKSDNNIINFINHGTGTHKFEILKYLLENDCYEDPNYIIEHICCPFNIGKNNTDIHEPIVVELLNLCESKQIDVPKLTPIIISNYLLSNRKISNTLLKFGTTIYSDGIIDNDSDINNILLNIINNQCEEIKDYVYNKPQLWTNKSIMLATIISENIDLFDFLLELNRDNNLYLEQSFILCANSIKMLKHFVNSINLDITSRVRETYVYAYSIIKNKSVASYLLLYYGNDMIYDSDNIFENQKNLFVNDFLREIKNLNFV</sequence>
<dbReference type="EMBL" id="AY653733">
    <property type="protein sequence ID" value="AAV50994.1"/>
    <property type="molecule type" value="Genomic_DNA"/>
</dbReference>
<dbReference type="SMR" id="Q5UNZ0"/>
<dbReference type="KEGG" id="vg:9925390"/>
<dbReference type="OrthoDB" id="35160at10239"/>
<dbReference type="Proteomes" id="UP000001134">
    <property type="component" value="Genome"/>
</dbReference>
<dbReference type="SUPFAM" id="SSF140860">
    <property type="entry name" value="Pseudo ankyrin repeat-like"/>
    <property type="match status" value="1"/>
</dbReference>
<gene>
    <name type="ordered locus">MIMI_R734</name>
</gene>
<accession>Q5UNZ0</accession>
<organismHost>
    <name type="scientific">Acanthamoeba polyphaga</name>
    <name type="common">Amoeba</name>
    <dbReference type="NCBI Taxonomy" id="5757"/>
</organismHost>
<feature type="chain" id="PRO_0000067188" description="Putative ankyrin repeat protein R734">
    <location>
        <begin position="1"/>
        <end position="652"/>
    </location>
</feature>
<feature type="repeat" description="ANK 1">
    <location>
        <begin position="77"/>
        <end position="105"/>
    </location>
</feature>
<feature type="repeat" description="ANK 2">
    <location>
        <begin position="106"/>
        <end position="136"/>
    </location>
</feature>
<feature type="repeat" description="ANK 3">
    <location>
        <begin position="138"/>
        <end position="167"/>
    </location>
</feature>
<feature type="repeat" description="ANK 4">
    <location>
        <begin position="192"/>
        <end position="219"/>
    </location>
</feature>
<feature type="repeat" description="ANK 5">
    <location>
        <begin position="220"/>
        <end position="242"/>
    </location>
</feature>
<feature type="repeat" description="ANK 6">
    <location>
        <begin position="243"/>
        <end position="274"/>
    </location>
</feature>
<feature type="repeat" description="ANK 7">
    <location>
        <begin position="307"/>
        <end position="337"/>
    </location>
</feature>
<feature type="repeat" description="ANK 8">
    <location>
        <begin position="396"/>
        <end position="430"/>
    </location>
</feature>
<feature type="repeat" description="ANK 9">
    <location>
        <begin position="468"/>
        <end position="498"/>
    </location>
</feature>
<feature type="repeat" description="ANK 10">
    <location>
        <begin position="535"/>
        <end position="564"/>
    </location>
</feature>
<keyword id="KW-0040">ANK repeat</keyword>
<keyword id="KW-1185">Reference proteome</keyword>
<keyword id="KW-0677">Repeat</keyword>